<sequence length="264" mass="28677">MSDILQTILARKAEEVAQRRAQRPLEDLQVAVASAPPVRGFVRALQAAVANGDPAVIAEVKKASPSKGVIRPDFRPADIAVSYEFGGASCLSVLTDVDFFQGADAYLQQARDACTLPVLRKDFVIDAYQVYEARVLGADCILLIVAALDDTQLATLSELAMSLGMDVLVEVHDIDELERALQVPAPMIGINNRNLRTFEVSLQTTLDMQKAVPRDRLLVTESGILGPQDVALMRDAGIHSFLVGEAFMRVEEPGEGLRQLFFAA</sequence>
<accession>B4SLE8</accession>
<protein>
    <recommendedName>
        <fullName evidence="1">Indole-3-glycerol phosphate synthase</fullName>
        <shortName evidence="1">IGPS</shortName>
        <ecNumber evidence="1">4.1.1.48</ecNumber>
    </recommendedName>
</protein>
<dbReference type="EC" id="4.1.1.48" evidence="1"/>
<dbReference type="EMBL" id="CP001111">
    <property type="protein sequence ID" value="ACF53417.1"/>
    <property type="molecule type" value="Genomic_DNA"/>
</dbReference>
<dbReference type="RefSeq" id="WP_012512312.1">
    <property type="nucleotide sequence ID" value="NC_011071.1"/>
</dbReference>
<dbReference type="SMR" id="B4SLE8"/>
<dbReference type="STRING" id="391008.Smal_3718"/>
<dbReference type="KEGG" id="smt:Smal_3718"/>
<dbReference type="eggNOG" id="COG0134">
    <property type="taxonomic scope" value="Bacteria"/>
</dbReference>
<dbReference type="HOGENOM" id="CLU_034247_2_0_6"/>
<dbReference type="OrthoDB" id="9804217at2"/>
<dbReference type="UniPathway" id="UPA00035">
    <property type="reaction ID" value="UER00043"/>
</dbReference>
<dbReference type="Proteomes" id="UP000001867">
    <property type="component" value="Chromosome"/>
</dbReference>
<dbReference type="GO" id="GO:0004425">
    <property type="term" value="F:indole-3-glycerol-phosphate synthase activity"/>
    <property type="evidence" value="ECO:0007669"/>
    <property type="project" value="UniProtKB-UniRule"/>
</dbReference>
<dbReference type="GO" id="GO:0004640">
    <property type="term" value="F:phosphoribosylanthranilate isomerase activity"/>
    <property type="evidence" value="ECO:0007669"/>
    <property type="project" value="TreeGrafter"/>
</dbReference>
<dbReference type="GO" id="GO:0000162">
    <property type="term" value="P:L-tryptophan biosynthetic process"/>
    <property type="evidence" value="ECO:0007669"/>
    <property type="project" value="UniProtKB-UniRule"/>
</dbReference>
<dbReference type="CDD" id="cd00331">
    <property type="entry name" value="IGPS"/>
    <property type="match status" value="1"/>
</dbReference>
<dbReference type="FunFam" id="3.20.20.70:FF:000024">
    <property type="entry name" value="Indole-3-glycerol phosphate synthase"/>
    <property type="match status" value="1"/>
</dbReference>
<dbReference type="Gene3D" id="3.20.20.70">
    <property type="entry name" value="Aldolase class I"/>
    <property type="match status" value="1"/>
</dbReference>
<dbReference type="HAMAP" id="MF_00134_B">
    <property type="entry name" value="IGPS_B"/>
    <property type="match status" value="1"/>
</dbReference>
<dbReference type="InterPro" id="IPR013785">
    <property type="entry name" value="Aldolase_TIM"/>
</dbReference>
<dbReference type="InterPro" id="IPR045186">
    <property type="entry name" value="Indole-3-glycerol_P_synth"/>
</dbReference>
<dbReference type="InterPro" id="IPR013798">
    <property type="entry name" value="Indole-3-glycerol_P_synth_dom"/>
</dbReference>
<dbReference type="InterPro" id="IPR001468">
    <property type="entry name" value="Indole-3-GlycerolPSynthase_CS"/>
</dbReference>
<dbReference type="InterPro" id="IPR011060">
    <property type="entry name" value="RibuloseP-bd_barrel"/>
</dbReference>
<dbReference type="NCBIfam" id="NF001370">
    <property type="entry name" value="PRK00278.1-2"/>
    <property type="match status" value="1"/>
</dbReference>
<dbReference type="NCBIfam" id="NF001373">
    <property type="entry name" value="PRK00278.1-6"/>
    <property type="match status" value="1"/>
</dbReference>
<dbReference type="NCBIfam" id="NF001377">
    <property type="entry name" value="PRK00278.2-4"/>
    <property type="match status" value="1"/>
</dbReference>
<dbReference type="PANTHER" id="PTHR22854:SF2">
    <property type="entry name" value="INDOLE-3-GLYCEROL-PHOSPHATE SYNTHASE"/>
    <property type="match status" value="1"/>
</dbReference>
<dbReference type="PANTHER" id="PTHR22854">
    <property type="entry name" value="TRYPTOPHAN BIOSYNTHESIS PROTEIN"/>
    <property type="match status" value="1"/>
</dbReference>
<dbReference type="Pfam" id="PF00218">
    <property type="entry name" value="IGPS"/>
    <property type="match status" value="1"/>
</dbReference>
<dbReference type="SUPFAM" id="SSF51366">
    <property type="entry name" value="Ribulose-phoshate binding barrel"/>
    <property type="match status" value="1"/>
</dbReference>
<dbReference type="PROSITE" id="PS00614">
    <property type="entry name" value="IGPS"/>
    <property type="match status" value="1"/>
</dbReference>
<organism>
    <name type="scientific">Stenotrophomonas maltophilia (strain R551-3)</name>
    <dbReference type="NCBI Taxonomy" id="391008"/>
    <lineage>
        <taxon>Bacteria</taxon>
        <taxon>Pseudomonadati</taxon>
        <taxon>Pseudomonadota</taxon>
        <taxon>Gammaproteobacteria</taxon>
        <taxon>Lysobacterales</taxon>
        <taxon>Lysobacteraceae</taxon>
        <taxon>Stenotrophomonas</taxon>
        <taxon>Stenotrophomonas maltophilia group</taxon>
    </lineage>
</organism>
<gene>
    <name evidence="1" type="primary">trpC</name>
    <name type="ordered locus">Smal_3718</name>
</gene>
<proteinExistence type="inferred from homology"/>
<comment type="catalytic activity">
    <reaction evidence="1">
        <text>1-(2-carboxyphenylamino)-1-deoxy-D-ribulose 5-phosphate + H(+) = (1S,2R)-1-C-(indol-3-yl)glycerol 3-phosphate + CO2 + H2O</text>
        <dbReference type="Rhea" id="RHEA:23476"/>
        <dbReference type="ChEBI" id="CHEBI:15377"/>
        <dbReference type="ChEBI" id="CHEBI:15378"/>
        <dbReference type="ChEBI" id="CHEBI:16526"/>
        <dbReference type="ChEBI" id="CHEBI:58613"/>
        <dbReference type="ChEBI" id="CHEBI:58866"/>
        <dbReference type="EC" id="4.1.1.48"/>
    </reaction>
</comment>
<comment type="pathway">
    <text evidence="1">Amino-acid biosynthesis; L-tryptophan biosynthesis; L-tryptophan from chorismate: step 4/5.</text>
</comment>
<comment type="similarity">
    <text evidence="1">Belongs to the TrpC family.</text>
</comment>
<keyword id="KW-0028">Amino-acid biosynthesis</keyword>
<keyword id="KW-0057">Aromatic amino acid biosynthesis</keyword>
<keyword id="KW-0210">Decarboxylase</keyword>
<keyword id="KW-0456">Lyase</keyword>
<keyword id="KW-0822">Tryptophan biosynthesis</keyword>
<feature type="chain" id="PRO_1000095895" description="Indole-3-glycerol phosphate synthase">
    <location>
        <begin position="1"/>
        <end position="264"/>
    </location>
</feature>
<evidence type="ECO:0000255" key="1">
    <source>
        <dbReference type="HAMAP-Rule" id="MF_00134"/>
    </source>
</evidence>
<reference key="1">
    <citation type="submission" date="2008-06" db="EMBL/GenBank/DDBJ databases">
        <title>Complete sequence of Stenotrophomonas maltophilia R551-3.</title>
        <authorList>
            <consortium name="US DOE Joint Genome Institute"/>
            <person name="Lucas S."/>
            <person name="Copeland A."/>
            <person name="Lapidus A."/>
            <person name="Glavina del Rio T."/>
            <person name="Dalin E."/>
            <person name="Tice H."/>
            <person name="Pitluck S."/>
            <person name="Chain P."/>
            <person name="Malfatti S."/>
            <person name="Shin M."/>
            <person name="Vergez L."/>
            <person name="Lang D."/>
            <person name="Schmutz J."/>
            <person name="Larimer F."/>
            <person name="Land M."/>
            <person name="Hauser L."/>
            <person name="Kyrpides N."/>
            <person name="Mikhailova N."/>
            <person name="Taghavi S."/>
            <person name="Monchy S."/>
            <person name="Newman L."/>
            <person name="Vangronsveld J."/>
            <person name="van der Lelie D."/>
            <person name="Richardson P."/>
        </authorList>
    </citation>
    <scope>NUCLEOTIDE SEQUENCE [LARGE SCALE GENOMIC DNA]</scope>
    <source>
        <strain>R551-3</strain>
    </source>
</reference>
<name>TRPC_STRM5</name>